<reference key="1">
    <citation type="journal article" date="1993" name="Plant Physiol.">
        <title>cDNA cloning and sequence analysis of a pathogen-induced thaumatin-like protein from rice (Oryza sativa).</title>
        <authorList>
            <person name="Reimmann C."/>
            <person name="Dudler R."/>
        </authorList>
    </citation>
    <scope>NUCLEOTIDE SEQUENCE [MRNA]</scope>
    <source>
        <strain>cv. Nohrin</strain>
    </source>
</reference>
<reference key="2">
    <citation type="journal article" date="2005" name="BMC Biol.">
        <title>The sequence of rice chromosomes 11 and 12, rich in disease resistance genes and recent gene duplications.</title>
        <authorList>
            <consortium name="The rice chromosomes 11 and 12 sequencing consortia"/>
        </authorList>
    </citation>
    <scope>NUCLEOTIDE SEQUENCE [LARGE SCALE GENOMIC DNA]</scope>
    <source>
        <strain>cv. Nipponbare</strain>
    </source>
</reference>
<reference key="3">
    <citation type="journal article" date="2005" name="Nature">
        <title>The map-based sequence of the rice genome.</title>
        <authorList>
            <consortium name="International rice genome sequencing project (IRGSP)"/>
        </authorList>
    </citation>
    <scope>NUCLEOTIDE SEQUENCE [LARGE SCALE GENOMIC DNA]</scope>
    <source>
        <strain>cv. Nipponbare</strain>
    </source>
</reference>
<reference key="4">
    <citation type="journal article" date="2008" name="Nucleic Acids Res.">
        <title>The rice annotation project database (RAP-DB): 2008 update.</title>
        <authorList>
            <consortium name="The rice annotation project (RAP)"/>
        </authorList>
    </citation>
    <scope>GENOME REANNOTATION</scope>
    <source>
        <strain>cv. Nipponbare</strain>
    </source>
</reference>
<reference key="5">
    <citation type="journal article" date="2013" name="Rice">
        <title>Improvement of the Oryza sativa Nipponbare reference genome using next generation sequence and optical map data.</title>
        <authorList>
            <person name="Kawahara Y."/>
            <person name="de la Bastide M."/>
            <person name="Hamilton J.P."/>
            <person name="Kanamori H."/>
            <person name="McCombie W.R."/>
            <person name="Ouyang S."/>
            <person name="Schwartz D.C."/>
            <person name="Tanaka T."/>
            <person name="Wu J."/>
            <person name="Zhou S."/>
            <person name="Childs K.L."/>
            <person name="Davidson R.M."/>
            <person name="Lin H."/>
            <person name="Quesada-Ocampo L."/>
            <person name="Vaillancourt B."/>
            <person name="Sakai H."/>
            <person name="Lee S.S."/>
            <person name="Kim J."/>
            <person name="Numa H."/>
            <person name="Itoh T."/>
            <person name="Buell C.R."/>
            <person name="Matsumoto T."/>
        </authorList>
    </citation>
    <scope>GENOME REANNOTATION</scope>
    <source>
        <strain>cv. Nipponbare</strain>
    </source>
</reference>
<reference key="6">
    <citation type="submission" date="2006-10" db="EMBL/GenBank/DDBJ databases">
        <title>Oryza sativa full length cDNA.</title>
        <authorList>
            <consortium name="The rice full-length cDNA consortium"/>
        </authorList>
    </citation>
    <scope>NUCLEOTIDE SEQUENCE [LARGE SCALE MRNA]</scope>
    <source>
        <strain>cv. Nipponbare</strain>
    </source>
</reference>
<reference key="7">
    <citation type="journal article" date="2006" name="Proteomics">
        <title>Proteomic analysis of rice leaf, stem and root tissues during growth course.</title>
        <authorList>
            <person name="Nozu Y."/>
            <person name="Tsugita A."/>
            <person name="Kamijo K."/>
        </authorList>
    </citation>
    <scope>PROTEIN SEQUENCE [LARGE SCALE ANALYSIS] OF 27-33</scope>
    <scope>IDENTIFICATION BY MASS SPECTROMETRY</scope>
    <source>
        <strain>cv. Nipponbare</strain>
    </source>
</reference>
<name>TLP_ORYSJ</name>
<comment type="subcellular location">
    <subcellularLocation>
        <location evidence="3">Secreted</location>
    </subcellularLocation>
</comment>
<comment type="induction">
    <text>By pathogen infection.</text>
</comment>
<comment type="similarity">
    <text evidence="1">Belongs to the thaumatin family.</text>
</comment>
<evidence type="ECO:0000255" key="1">
    <source>
        <dbReference type="PROSITE-ProRule" id="PRU00699"/>
    </source>
</evidence>
<evidence type="ECO:0000269" key="2">
    <source>
    </source>
</evidence>
<evidence type="ECO:0000305" key="3"/>
<proteinExistence type="evidence at protein level"/>
<protein>
    <recommendedName>
        <fullName>Thaumatin-like protein</fullName>
    </recommendedName>
</protein>
<organism>
    <name type="scientific">Oryza sativa subsp. japonica</name>
    <name type="common">Rice</name>
    <dbReference type="NCBI Taxonomy" id="39947"/>
    <lineage>
        <taxon>Eukaryota</taxon>
        <taxon>Viridiplantae</taxon>
        <taxon>Streptophyta</taxon>
        <taxon>Embryophyta</taxon>
        <taxon>Tracheophyta</taxon>
        <taxon>Spermatophyta</taxon>
        <taxon>Magnoliopsida</taxon>
        <taxon>Liliopsida</taxon>
        <taxon>Poales</taxon>
        <taxon>Poaceae</taxon>
        <taxon>BOP clade</taxon>
        <taxon>Oryzoideae</taxon>
        <taxon>Oryzeae</taxon>
        <taxon>Oryzinae</taxon>
        <taxon>Oryza</taxon>
        <taxon>Oryza sativa</taxon>
    </lineage>
</organism>
<keyword id="KW-0903">Direct protein sequencing</keyword>
<keyword id="KW-1185">Reference proteome</keyword>
<keyword id="KW-0964">Secreted</keyword>
<keyword id="KW-0732">Signal</keyword>
<dbReference type="EMBL" id="X68197">
    <property type="protein sequence ID" value="CAA48278.1"/>
    <property type="molecule type" value="mRNA"/>
</dbReference>
<dbReference type="EMBL" id="DP000011">
    <property type="protein sequence ID" value="ABA99520.1"/>
    <property type="molecule type" value="Genomic_DNA"/>
</dbReference>
<dbReference type="EMBL" id="AP008218">
    <property type="protein sequence ID" value="BAF30350.1"/>
    <property type="molecule type" value="Genomic_DNA"/>
</dbReference>
<dbReference type="EMBL" id="AP014968">
    <property type="protein sequence ID" value="BAT18199.1"/>
    <property type="molecule type" value="Genomic_DNA"/>
</dbReference>
<dbReference type="EMBL" id="AK241419">
    <property type="protein sequence ID" value="BAH01026.1"/>
    <property type="molecule type" value="mRNA"/>
</dbReference>
<dbReference type="PIR" id="S25551">
    <property type="entry name" value="S25551"/>
</dbReference>
<dbReference type="RefSeq" id="XP_015618577.1">
    <property type="nucleotide sequence ID" value="XM_015763091.1"/>
</dbReference>
<dbReference type="SMR" id="P31110"/>
<dbReference type="FunCoup" id="P31110">
    <property type="interactions" value="4"/>
</dbReference>
<dbReference type="STRING" id="39947.P31110"/>
<dbReference type="PaxDb" id="39947-P31110"/>
<dbReference type="EnsemblPlants" id="Os12t0628600-01">
    <property type="protein sequence ID" value="Os12t0628600-01"/>
    <property type="gene ID" value="Os12g0628600"/>
</dbReference>
<dbReference type="Gramene" id="Os12t0628600-01">
    <property type="protein sequence ID" value="Os12t0628600-01"/>
    <property type="gene ID" value="Os12g0628600"/>
</dbReference>
<dbReference type="KEGG" id="dosa:Os12g0628600"/>
<dbReference type="eggNOG" id="ENOG502QPIR">
    <property type="taxonomic scope" value="Eukaryota"/>
</dbReference>
<dbReference type="HOGENOM" id="CLU_043181_5_1_1"/>
<dbReference type="InParanoid" id="P31110"/>
<dbReference type="OMA" id="YSYATDY"/>
<dbReference type="OrthoDB" id="622371at2759"/>
<dbReference type="Proteomes" id="UP000000763">
    <property type="component" value="Chromosome 12"/>
</dbReference>
<dbReference type="Proteomes" id="UP000059680">
    <property type="component" value="Chromosome 12"/>
</dbReference>
<dbReference type="GO" id="GO:0005576">
    <property type="term" value="C:extracellular region"/>
    <property type="evidence" value="ECO:0007669"/>
    <property type="project" value="UniProtKB-SubCell"/>
</dbReference>
<dbReference type="GO" id="GO:0006952">
    <property type="term" value="P:defense response"/>
    <property type="evidence" value="ECO:0000318"/>
    <property type="project" value="GO_Central"/>
</dbReference>
<dbReference type="CDD" id="cd09217">
    <property type="entry name" value="TLP-P"/>
    <property type="match status" value="1"/>
</dbReference>
<dbReference type="FunFam" id="2.60.110.10:FF:000005">
    <property type="entry name" value="Osmotin-like protein OSM34"/>
    <property type="match status" value="1"/>
</dbReference>
<dbReference type="Gene3D" id="2.60.110.10">
    <property type="entry name" value="Thaumatin"/>
    <property type="match status" value="2"/>
</dbReference>
<dbReference type="InterPro" id="IPR037176">
    <property type="entry name" value="Osmotin/thaumatin-like_sf"/>
</dbReference>
<dbReference type="InterPro" id="IPR001938">
    <property type="entry name" value="Thaumatin"/>
</dbReference>
<dbReference type="InterPro" id="IPR017949">
    <property type="entry name" value="Thaumatin_CS"/>
</dbReference>
<dbReference type="PANTHER" id="PTHR31048">
    <property type="entry name" value="OS03G0233200 PROTEIN"/>
    <property type="match status" value="1"/>
</dbReference>
<dbReference type="Pfam" id="PF00314">
    <property type="entry name" value="Thaumatin"/>
    <property type="match status" value="1"/>
</dbReference>
<dbReference type="PIRSF" id="PIRSF002703">
    <property type="entry name" value="Thaumatin"/>
    <property type="match status" value="1"/>
</dbReference>
<dbReference type="PRINTS" id="PR00347">
    <property type="entry name" value="THAUMATIN"/>
</dbReference>
<dbReference type="SMART" id="SM00205">
    <property type="entry name" value="THN"/>
    <property type="match status" value="1"/>
</dbReference>
<dbReference type="SUPFAM" id="SSF49870">
    <property type="entry name" value="Osmotin, thaumatin-like protein"/>
    <property type="match status" value="1"/>
</dbReference>
<dbReference type="PROSITE" id="PS00316">
    <property type="entry name" value="THAUMATIN_1"/>
    <property type="match status" value="1"/>
</dbReference>
<dbReference type="PROSITE" id="PS51367">
    <property type="entry name" value="THAUMATIN_2"/>
    <property type="match status" value="1"/>
</dbReference>
<sequence>MASPATSSAVLVVVLVATLAAGGANAATFTITNRCSFTVWPAATPVGGGVQLSPGQTWTINVPAGTSSGRVWGRTGCSFDGSGRGSCATGDCAGALSCTLSGQKPLTLAEFTIGGSQDFYDLSVIDGYNVAMSFSCSSGVTVTCRDSRCPDAYLFPEDNTKTHACSGNSNYQVVFCP</sequence>
<gene>
    <name type="ordered locus">Os12g0628600</name>
    <name type="ordered locus">LOC_Os12g43380</name>
</gene>
<accession>P31110</accession>
<accession>Q0ILR5</accession>
<accession>Q2QLT4</accession>
<feature type="signal peptide" evidence="2">
    <location>
        <begin position="1"/>
        <end position="26"/>
    </location>
</feature>
<feature type="chain" id="PRO_0000034020" description="Thaumatin-like protein">
    <location>
        <begin position="27"/>
        <end position="177"/>
    </location>
</feature>